<reference key="1">
    <citation type="journal article" date="2014" name="Stand. Genomic Sci.">
        <title>Complete genome sequence of Burkholderia phymatum STM815(T), a broad host range and efficient nitrogen-fixing symbiont of Mimosa species.</title>
        <authorList>
            <person name="Moulin L."/>
            <person name="Klonowska A."/>
            <person name="Caroline B."/>
            <person name="Booth K."/>
            <person name="Vriezen J.A."/>
            <person name="Melkonian R."/>
            <person name="James E.K."/>
            <person name="Young J.P."/>
            <person name="Bena G."/>
            <person name="Hauser L."/>
            <person name="Land M."/>
            <person name="Kyrpides N."/>
            <person name="Bruce D."/>
            <person name="Chain P."/>
            <person name="Copeland A."/>
            <person name="Pitluck S."/>
            <person name="Woyke T."/>
            <person name="Lizotte-Waniewski M."/>
            <person name="Bristow J."/>
            <person name="Riley M."/>
        </authorList>
    </citation>
    <scope>NUCLEOTIDE SEQUENCE [LARGE SCALE GENOMIC DNA]</scope>
    <source>
        <strain>DSM 17167 / CIP 108236 / LMG 21445 / STM815</strain>
    </source>
</reference>
<feature type="chain" id="PRO_0000364495" description="Fructose-1,6-bisphosphatase class 1 1">
    <location>
        <begin position="1"/>
        <end position="338"/>
    </location>
</feature>
<feature type="binding site" evidence="1">
    <location>
        <position position="94"/>
    </location>
    <ligand>
        <name>Mg(2+)</name>
        <dbReference type="ChEBI" id="CHEBI:18420"/>
        <label>1</label>
    </ligand>
</feature>
<feature type="binding site" evidence="1">
    <location>
        <position position="116"/>
    </location>
    <ligand>
        <name>Mg(2+)</name>
        <dbReference type="ChEBI" id="CHEBI:18420"/>
        <label>1</label>
    </ligand>
</feature>
<feature type="binding site" evidence="1">
    <location>
        <position position="116"/>
    </location>
    <ligand>
        <name>Mg(2+)</name>
        <dbReference type="ChEBI" id="CHEBI:18420"/>
        <label>2</label>
    </ligand>
</feature>
<feature type="binding site" evidence="1">
    <location>
        <position position="118"/>
    </location>
    <ligand>
        <name>Mg(2+)</name>
        <dbReference type="ChEBI" id="CHEBI:18420"/>
        <label>1</label>
    </ligand>
</feature>
<feature type="binding site" evidence="1">
    <location>
        <begin position="119"/>
        <end position="122"/>
    </location>
    <ligand>
        <name>substrate</name>
    </ligand>
</feature>
<feature type="binding site" evidence="1">
    <location>
        <position position="119"/>
    </location>
    <ligand>
        <name>Mg(2+)</name>
        <dbReference type="ChEBI" id="CHEBI:18420"/>
        <label>2</label>
    </ligand>
</feature>
<feature type="binding site" evidence="1">
    <location>
        <position position="210"/>
    </location>
    <ligand>
        <name>substrate</name>
    </ligand>
</feature>
<feature type="binding site" evidence="1">
    <location>
        <position position="276"/>
    </location>
    <ligand>
        <name>substrate</name>
    </ligand>
</feature>
<feature type="binding site" evidence="1">
    <location>
        <position position="282"/>
    </location>
    <ligand>
        <name>Mg(2+)</name>
        <dbReference type="ChEBI" id="CHEBI:18420"/>
        <label>2</label>
    </ligand>
</feature>
<evidence type="ECO:0000255" key="1">
    <source>
        <dbReference type="HAMAP-Rule" id="MF_01855"/>
    </source>
</evidence>
<gene>
    <name evidence="1" type="primary">fbp1</name>
    <name type="ordered locus">Bphy_0685</name>
</gene>
<name>F16A1_PARP8</name>
<dbReference type="EC" id="3.1.3.11" evidence="1"/>
<dbReference type="EMBL" id="CP001043">
    <property type="protein sequence ID" value="ACC69874.1"/>
    <property type="molecule type" value="Genomic_DNA"/>
</dbReference>
<dbReference type="RefSeq" id="WP_012400094.1">
    <property type="nucleotide sequence ID" value="NC_010622.1"/>
</dbReference>
<dbReference type="SMR" id="B2JEJ7"/>
<dbReference type="STRING" id="391038.Bphy_0685"/>
<dbReference type="KEGG" id="bph:Bphy_0685"/>
<dbReference type="eggNOG" id="COG0158">
    <property type="taxonomic scope" value="Bacteria"/>
</dbReference>
<dbReference type="HOGENOM" id="CLU_039977_0_0_4"/>
<dbReference type="OrthoDB" id="9806756at2"/>
<dbReference type="UniPathway" id="UPA00138"/>
<dbReference type="Proteomes" id="UP000001192">
    <property type="component" value="Chromosome 1"/>
</dbReference>
<dbReference type="GO" id="GO:0005829">
    <property type="term" value="C:cytosol"/>
    <property type="evidence" value="ECO:0007669"/>
    <property type="project" value="TreeGrafter"/>
</dbReference>
<dbReference type="GO" id="GO:0042132">
    <property type="term" value="F:fructose 1,6-bisphosphate 1-phosphatase activity"/>
    <property type="evidence" value="ECO:0007669"/>
    <property type="project" value="UniProtKB-UniRule"/>
</dbReference>
<dbReference type="GO" id="GO:0000287">
    <property type="term" value="F:magnesium ion binding"/>
    <property type="evidence" value="ECO:0007669"/>
    <property type="project" value="UniProtKB-UniRule"/>
</dbReference>
<dbReference type="GO" id="GO:0030388">
    <property type="term" value="P:fructose 1,6-bisphosphate metabolic process"/>
    <property type="evidence" value="ECO:0007669"/>
    <property type="project" value="TreeGrafter"/>
</dbReference>
<dbReference type="GO" id="GO:0006002">
    <property type="term" value="P:fructose 6-phosphate metabolic process"/>
    <property type="evidence" value="ECO:0007669"/>
    <property type="project" value="TreeGrafter"/>
</dbReference>
<dbReference type="GO" id="GO:0006000">
    <property type="term" value="P:fructose metabolic process"/>
    <property type="evidence" value="ECO:0007669"/>
    <property type="project" value="TreeGrafter"/>
</dbReference>
<dbReference type="GO" id="GO:0006094">
    <property type="term" value="P:gluconeogenesis"/>
    <property type="evidence" value="ECO:0007669"/>
    <property type="project" value="UniProtKB-UniRule"/>
</dbReference>
<dbReference type="GO" id="GO:0005986">
    <property type="term" value="P:sucrose biosynthetic process"/>
    <property type="evidence" value="ECO:0007669"/>
    <property type="project" value="TreeGrafter"/>
</dbReference>
<dbReference type="CDD" id="cd00354">
    <property type="entry name" value="FBPase"/>
    <property type="match status" value="1"/>
</dbReference>
<dbReference type="FunFam" id="3.30.540.10:FF:000006">
    <property type="entry name" value="Fructose-1,6-bisphosphatase class 1"/>
    <property type="match status" value="1"/>
</dbReference>
<dbReference type="FunFam" id="3.40.190.80:FF:000011">
    <property type="entry name" value="Fructose-1,6-bisphosphatase class 1"/>
    <property type="match status" value="1"/>
</dbReference>
<dbReference type="Gene3D" id="3.40.190.80">
    <property type="match status" value="1"/>
</dbReference>
<dbReference type="Gene3D" id="3.30.540.10">
    <property type="entry name" value="Fructose-1,6-Bisphosphatase, subunit A, domain 1"/>
    <property type="match status" value="1"/>
</dbReference>
<dbReference type="HAMAP" id="MF_01855">
    <property type="entry name" value="FBPase_class1"/>
    <property type="match status" value="1"/>
</dbReference>
<dbReference type="InterPro" id="IPR044015">
    <property type="entry name" value="FBPase_C_dom"/>
</dbReference>
<dbReference type="InterPro" id="IPR000146">
    <property type="entry name" value="FBPase_class-1"/>
</dbReference>
<dbReference type="InterPro" id="IPR033391">
    <property type="entry name" value="FBPase_N"/>
</dbReference>
<dbReference type="InterPro" id="IPR028343">
    <property type="entry name" value="FBPtase"/>
</dbReference>
<dbReference type="NCBIfam" id="NF006778">
    <property type="entry name" value="PRK09293.1-1"/>
    <property type="match status" value="1"/>
</dbReference>
<dbReference type="NCBIfam" id="NF006779">
    <property type="entry name" value="PRK09293.1-3"/>
    <property type="match status" value="1"/>
</dbReference>
<dbReference type="NCBIfam" id="NF006780">
    <property type="entry name" value="PRK09293.1-4"/>
    <property type="match status" value="1"/>
</dbReference>
<dbReference type="PANTHER" id="PTHR11556">
    <property type="entry name" value="FRUCTOSE-1,6-BISPHOSPHATASE-RELATED"/>
    <property type="match status" value="1"/>
</dbReference>
<dbReference type="PANTHER" id="PTHR11556:SF35">
    <property type="entry name" value="SEDOHEPTULOSE-1,7-BISPHOSPHATASE, CHLOROPLASTIC"/>
    <property type="match status" value="1"/>
</dbReference>
<dbReference type="Pfam" id="PF00316">
    <property type="entry name" value="FBPase"/>
    <property type="match status" value="1"/>
</dbReference>
<dbReference type="Pfam" id="PF18913">
    <property type="entry name" value="FBPase_C"/>
    <property type="match status" value="1"/>
</dbReference>
<dbReference type="PIRSF" id="PIRSF500210">
    <property type="entry name" value="FBPtase"/>
    <property type="match status" value="1"/>
</dbReference>
<dbReference type="PIRSF" id="PIRSF000904">
    <property type="entry name" value="FBPtase_SBPase"/>
    <property type="match status" value="1"/>
</dbReference>
<dbReference type="PRINTS" id="PR00115">
    <property type="entry name" value="F16BPHPHTASE"/>
</dbReference>
<dbReference type="SUPFAM" id="SSF56655">
    <property type="entry name" value="Carbohydrate phosphatase"/>
    <property type="match status" value="1"/>
</dbReference>
<sequence length="338" mass="37623">MSLQRRTTLTKYLIEQQRENNNLPADLRLLIEVVARACKAISYHVSKGALGDALGTAGSENVQGEVQKKLDILSNEILLEANEWGGNLAGMASEEMEQFFPIPANYPKGEYLLVFDPLDGSSNIDVNVSIGTIFSVLRCPDGQQPTEQSFLQKGTQQVAAGYAVYGPQTVLVLTTGNGVNCFTLDRELGSWVLTQSDMRIPVETREYAINASNQRHWYEPVQQYIGELNAGKDGPRQADFNMRWIASMVADVHRILNRGGIFMYPADKRDPSKPGKLRLMYEANPMSFIVEQAGGAATNGEKRILDIQPKSLHERVAVFLGSKNEVDRVTRYHLEKKS</sequence>
<comment type="catalytic activity">
    <reaction evidence="1">
        <text>beta-D-fructose 1,6-bisphosphate + H2O = beta-D-fructose 6-phosphate + phosphate</text>
        <dbReference type="Rhea" id="RHEA:11064"/>
        <dbReference type="ChEBI" id="CHEBI:15377"/>
        <dbReference type="ChEBI" id="CHEBI:32966"/>
        <dbReference type="ChEBI" id="CHEBI:43474"/>
        <dbReference type="ChEBI" id="CHEBI:57634"/>
        <dbReference type="EC" id="3.1.3.11"/>
    </reaction>
</comment>
<comment type="cofactor">
    <cofactor evidence="1">
        <name>Mg(2+)</name>
        <dbReference type="ChEBI" id="CHEBI:18420"/>
    </cofactor>
    <text evidence="1">Binds 2 magnesium ions per subunit.</text>
</comment>
<comment type="pathway">
    <text evidence="1">Carbohydrate biosynthesis; gluconeogenesis.</text>
</comment>
<comment type="subunit">
    <text evidence="1">Homotetramer.</text>
</comment>
<comment type="subcellular location">
    <subcellularLocation>
        <location evidence="1">Cytoplasm</location>
    </subcellularLocation>
</comment>
<comment type="similarity">
    <text evidence="1">Belongs to the FBPase class 1 family.</text>
</comment>
<proteinExistence type="inferred from homology"/>
<keyword id="KW-0119">Carbohydrate metabolism</keyword>
<keyword id="KW-0963">Cytoplasm</keyword>
<keyword id="KW-0378">Hydrolase</keyword>
<keyword id="KW-0460">Magnesium</keyword>
<keyword id="KW-0479">Metal-binding</keyword>
<keyword id="KW-1185">Reference proteome</keyword>
<organism>
    <name type="scientific">Paraburkholderia phymatum (strain DSM 17167 / CIP 108236 / LMG 21445 / STM815)</name>
    <name type="common">Burkholderia phymatum</name>
    <dbReference type="NCBI Taxonomy" id="391038"/>
    <lineage>
        <taxon>Bacteria</taxon>
        <taxon>Pseudomonadati</taxon>
        <taxon>Pseudomonadota</taxon>
        <taxon>Betaproteobacteria</taxon>
        <taxon>Burkholderiales</taxon>
        <taxon>Burkholderiaceae</taxon>
        <taxon>Paraburkholderia</taxon>
    </lineage>
</organism>
<protein>
    <recommendedName>
        <fullName evidence="1">Fructose-1,6-bisphosphatase class 1 1</fullName>
        <shortName evidence="1">FBPase class 1 1</shortName>
        <ecNumber evidence="1">3.1.3.11</ecNumber>
    </recommendedName>
    <alternativeName>
        <fullName evidence="1">D-fructose-1,6-bisphosphate 1-phosphohydrolase class 1 1</fullName>
    </alternativeName>
</protein>
<accession>B2JEJ7</accession>